<name>Y804_HAEIN</name>
<reference key="1">
    <citation type="journal article" date="1995" name="Science">
        <title>Whole-genome random sequencing and assembly of Haemophilus influenzae Rd.</title>
        <authorList>
            <person name="Fleischmann R.D."/>
            <person name="Adams M.D."/>
            <person name="White O."/>
            <person name="Clayton R.A."/>
            <person name="Kirkness E.F."/>
            <person name="Kerlavage A.R."/>
            <person name="Bult C.J."/>
            <person name="Tomb J.-F."/>
            <person name="Dougherty B.A."/>
            <person name="Merrick J.M."/>
            <person name="McKenney K."/>
            <person name="Sutton G.G."/>
            <person name="FitzHugh W."/>
            <person name="Fields C.A."/>
            <person name="Gocayne J.D."/>
            <person name="Scott J.D."/>
            <person name="Shirley R."/>
            <person name="Liu L.-I."/>
            <person name="Glodek A."/>
            <person name="Kelley J.M."/>
            <person name="Weidman J.F."/>
            <person name="Phillips C.A."/>
            <person name="Spriggs T."/>
            <person name="Hedblom E."/>
            <person name="Cotton M.D."/>
            <person name="Utterback T.R."/>
            <person name="Hanna M.C."/>
            <person name="Nguyen D.T."/>
            <person name="Saudek D.M."/>
            <person name="Brandon R.C."/>
            <person name="Fine L.D."/>
            <person name="Fritchman J.L."/>
            <person name="Fuhrmann J.L."/>
            <person name="Geoghagen N.S.M."/>
            <person name="Gnehm C.L."/>
            <person name="McDonald L.A."/>
            <person name="Small K.V."/>
            <person name="Fraser C.M."/>
            <person name="Smith H.O."/>
            <person name="Venter J.C."/>
        </authorList>
    </citation>
    <scope>NUCLEOTIDE SEQUENCE [LARGE SCALE GENOMIC DNA]</scope>
    <source>
        <strain>ATCC 51907 / DSM 11121 / KW20 / Rd</strain>
    </source>
</reference>
<feature type="chain" id="PRO_0000077956" description="Uncharacterized protein HI_0804">
    <location>
        <begin position="1"/>
        <end position="129"/>
    </location>
</feature>
<gene>
    <name type="ordered locus">HI_0804</name>
</gene>
<proteinExistence type="predicted"/>
<protein>
    <recommendedName>
        <fullName>Uncharacterized protein HI_0804</fullName>
    </recommendedName>
</protein>
<accession>P44053</accession>
<dbReference type="EMBL" id="L42023">
    <property type="protein sequence ID" value="AAC22464.1"/>
    <property type="molecule type" value="Genomic_DNA"/>
</dbReference>
<dbReference type="PIR" id="H64013">
    <property type="entry name" value="H64013"/>
</dbReference>
<dbReference type="SMR" id="P44053"/>
<dbReference type="STRING" id="71421.HI_0804"/>
<dbReference type="DNASU" id="950170"/>
<dbReference type="EnsemblBacteria" id="AAC22464">
    <property type="protein sequence ID" value="AAC22464"/>
    <property type="gene ID" value="HI_0804"/>
</dbReference>
<dbReference type="KEGG" id="hin:HI_0804"/>
<dbReference type="eggNOG" id="COG0664">
    <property type="taxonomic scope" value="Bacteria"/>
</dbReference>
<dbReference type="HOGENOM" id="CLU_1945742_0_0_6"/>
<dbReference type="PhylomeDB" id="P44053"/>
<dbReference type="Proteomes" id="UP000000579">
    <property type="component" value="Chromosome"/>
</dbReference>
<dbReference type="CDD" id="cd00038">
    <property type="entry name" value="CAP_ED"/>
    <property type="match status" value="1"/>
</dbReference>
<dbReference type="Gene3D" id="2.60.120.10">
    <property type="entry name" value="Jelly Rolls"/>
    <property type="match status" value="1"/>
</dbReference>
<dbReference type="InterPro" id="IPR000595">
    <property type="entry name" value="cNMP-bd_dom"/>
</dbReference>
<dbReference type="InterPro" id="IPR018490">
    <property type="entry name" value="cNMP-bd_dom_sf"/>
</dbReference>
<dbReference type="InterPro" id="IPR014710">
    <property type="entry name" value="RmlC-like_jellyroll"/>
</dbReference>
<dbReference type="Pfam" id="PF00027">
    <property type="entry name" value="cNMP_binding"/>
    <property type="match status" value="1"/>
</dbReference>
<dbReference type="SMART" id="SM00100">
    <property type="entry name" value="cNMP"/>
    <property type="match status" value="1"/>
</dbReference>
<dbReference type="SUPFAM" id="SSF51206">
    <property type="entry name" value="cAMP-binding domain-like"/>
    <property type="match status" value="1"/>
</dbReference>
<dbReference type="PROSITE" id="PS50042">
    <property type="entry name" value="CNMP_BINDING_3"/>
    <property type="match status" value="1"/>
</dbReference>
<organism>
    <name type="scientific">Haemophilus influenzae (strain ATCC 51907 / DSM 11121 / KW20 / Rd)</name>
    <dbReference type="NCBI Taxonomy" id="71421"/>
    <lineage>
        <taxon>Bacteria</taxon>
        <taxon>Pseudomonadati</taxon>
        <taxon>Pseudomonadota</taxon>
        <taxon>Gammaproteobacteria</taxon>
        <taxon>Pasteurellales</taxon>
        <taxon>Pasteurellaceae</taxon>
        <taxon>Haemophilus</taxon>
    </lineage>
</organism>
<sequence length="129" mass="15008">MFTLPYYLPQNLNKCIISESKTLEKNSLIYAQGEKPKEFYFLKQGLVGLYHSLENGKETLTRLYHANEYFGFRTIFSETSYHCSAKVLMEADIVRIFPGNHANFIANNPDFSCYLMKQLSNELLMQNTE</sequence>
<keyword id="KW-1185">Reference proteome</keyword>